<accession>Q32KY6</accession>
<proteinExistence type="evidence at transcript level"/>
<dbReference type="EC" id="3.6.1.12" evidence="2"/>
<dbReference type="EMBL" id="BC109855">
    <property type="protein sequence ID" value="AAI09856.1"/>
    <property type="molecule type" value="mRNA"/>
</dbReference>
<dbReference type="RefSeq" id="NP_001033291.1">
    <property type="nucleotide sequence ID" value="NM_001038202.2"/>
</dbReference>
<dbReference type="SMR" id="Q32KY6"/>
<dbReference type="FunCoup" id="Q32KY6">
    <property type="interactions" value="1544"/>
</dbReference>
<dbReference type="STRING" id="9913.ENSBTAP00000014406"/>
<dbReference type="PaxDb" id="9913-ENSBTAP00000014406"/>
<dbReference type="GeneID" id="614103"/>
<dbReference type="KEGG" id="bta:614103"/>
<dbReference type="CTD" id="79077"/>
<dbReference type="eggNOG" id="ENOG502S210">
    <property type="taxonomic scope" value="Eukaryota"/>
</dbReference>
<dbReference type="InParanoid" id="Q32KY6"/>
<dbReference type="OrthoDB" id="411123at2759"/>
<dbReference type="Proteomes" id="UP000009136">
    <property type="component" value="Unplaced"/>
</dbReference>
<dbReference type="GO" id="GO:0005829">
    <property type="term" value="C:cytosol"/>
    <property type="evidence" value="ECO:0000250"/>
    <property type="project" value="UniProtKB"/>
</dbReference>
<dbReference type="GO" id="GO:0005739">
    <property type="term" value="C:mitochondrion"/>
    <property type="evidence" value="ECO:0000250"/>
    <property type="project" value="UniProtKB"/>
</dbReference>
<dbReference type="GO" id="GO:0005634">
    <property type="term" value="C:nucleus"/>
    <property type="evidence" value="ECO:0000250"/>
    <property type="project" value="UniProtKB"/>
</dbReference>
<dbReference type="GO" id="GO:0047840">
    <property type="term" value="F:dCTP diphosphatase activity"/>
    <property type="evidence" value="ECO:0000250"/>
    <property type="project" value="UniProtKB"/>
</dbReference>
<dbReference type="GO" id="GO:0000287">
    <property type="term" value="F:magnesium ion binding"/>
    <property type="evidence" value="ECO:0000250"/>
    <property type="project" value="UniProtKB"/>
</dbReference>
<dbReference type="GO" id="GO:0047429">
    <property type="term" value="F:nucleoside triphosphate diphosphatase activity"/>
    <property type="evidence" value="ECO:0000250"/>
    <property type="project" value="UniProtKB"/>
</dbReference>
<dbReference type="GO" id="GO:0000166">
    <property type="term" value="F:nucleotide binding"/>
    <property type="evidence" value="ECO:0007669"/>
    <property type="project" value="UniProtKB-KW"/>
</dbReference>
<dbReference type="GO" id="GO:0006253">
    <property type="term" value="P:dCTP catabolic process"/>
    <property type="evidence" value="ECO:0000250"/>
    <property type="project" value="UniProtKB"/>
</dbReference>
<dbReference type="GO" id="GO:0042262">
    <property type="term" value="P:DNA protection"/>
    <property type="evidence" value="ECO:0000250"/>
    <property type="project" value="UniProtKB"/>
</dbReference>
<dbReference type="GO" id="GO:0009143">
    <property type="term" value="P:nucleoside triphosphate catabolic process"/>
    <property type="evidence" value="ECO:0000250"/>
    <property type="project" value="UniProtKB"/>
</dbReference>
<dbReference type="CDD" id="cd11537">
    <property type="entry name" value="NTP-PPase_RS21-C6_like"/>
    <property type="match status" value="1"/>
</dbReference>
<dbReference type="FunFam" id="1.10.287.1080:FF:000004">
    <property type="entry name" value="dCTP pyrophosphatase 1"/>
    <property type="match status" value="1"/>
</dbReference>
<dbReference type="Gene3D" id="1.10.287.1080">
    <property type="entry name" value="MazG-like"/>
    <property type="match status" value="1"/>
</dbReference>
<dbReference type="InterPro" id="IPR052555">
    <property type="entry name" value="dCTP_Pyrophosphatase"/>
</dbReference>
<dbReference type="InterPro" id="IPR025984">
    <property type="entry name" value="DCTPP"/>
</dbReference>
<dbReference type="PANTHER" id="PTHR46523">
    <property type="entry name" value="DCTP PYROPHOSPHATASE 1"/>
    <property type="match status" value="1"/>
</dbReference>
<dbReference type="PANTHER" id="PTHR46523:SF1">
    <property type="entry name" value="DCTP PYROPHOSPHATASE 1"/>
    <property type="match status" value="1"/>
</dbReference>
<dbReference type="Pfam" id="PF12643">
    <property type="entry name" value="MazG-like"/>
    <property type="match status" value="1"/>
</dbReference>
<dbReference type="SUPFAM" id="SSF101386">
    <property type="entry name" value="all-alpha NTP pyrophosphatases"/>
    <property type="match status" value="1"/>
</dbReference>
<comment type="function">
    <text evidence="1">Hydrolyzes deoxynucleoside triphosphates (dNTPs) to the corresponding nucleoside monophosphates. Has a strong preference for dCTP and its analogs including 5-iodo-dCTP and 5-methyl-dCTP for which it may even have a higher efficiency. May protect DNA or RNA against the incorporation of these genotoxic nucleotide analogs through their catabolism.</text>
</comment>
<comment type="catalytic activity">
    <reaction evidence="2">
        <text>dCTP + H2O = dCMP + diphosphate + H(+)</text>
        <dbReference type="Rhea" id="RHEA:22636"/>
        <dbReference type="ChEBI" id="CHEBI:15377"/>
        <dbReference type="ChEBI" id="CHEBI:15378"/>
        <dbReference type="ChEBI" id="CHEBI:33019"/>
        <dbReference type="ChEBI" id="CHEBI:57566"/>
        <dbReference type="ChEBI" id="CHEBI:61481"/>
        <dbReference type="EC" id="3.6.1.12"/>
    </reaction>
</comment>
<comment type="cofactor">
    <cofactor evidence="2">
        <name>Mg(2+)</name>
        <dbReference type="ChEBI" id="CHEBI:18420"/>
    </cofactor>
    <text evidence="2">Probably binds two or three Mg(2+) ions per subunit.</text>
</comment>
<comment type="subunit">
    <text evidence="2">Homotetramer.</text>
</comment>
<comment type="subcellular location">
    <subcellularLocation>
        <location evidence="1">Cytoplasm</location>
        <location evidence="1">Cytosol</location>
    </subcellularLocation>
    <text evidence="1">May also localize to mitochondrion and nucleus.</text>
</comment>
<organism>
    <name type="scientific">Bos taurus</name>
    <name type="common">Bovine</name>
    <dbReference type="NCBI Taxonomy" id="9913"/>
    <lineage>
        <taxon>Eukaryota</taxon>
        <taxon>Metazoa</taxon>
        <taxon>Chordata</taxon>
        <taxon>Craniata</taxon>
        <taxon>Vertebrata</taxon>
        <taxon>Euteleostomi</taxon>
        <taxon>Mammalia</taxon>
        <taxon>Eutheria</taxon>
        <taxon>Laurasiatheria</taxon>
        <taxon>Artiodactyla</taxon>
        <taxon>Ruminantia</taxon>
        <taxon>Pecora</taxon>
        <taxon>Bovidae</taxon>
        <taxon>Bovinae</taxon>
        <taxon>Bos</taxon>
    </lineage>
</organism>
<keyword id="KW-0963">Cytoplasm</keyword>
<keyword id="KW-0378">Hydrolase</keyword>
<keyword id="KW-0460">Magnesium</keyword>
<keyword id="KW-0479">Metal-binding</keyword>
<keyword id="KW-0547">Nucleotide-binding</keyword>
<keyword id="KW-0597">Phosphoprotein</keyword>
<keyword id="KW-1185">Reference proteome</keyword>
<reference key="1">
    <citation type="submission" date="2005-11" db="EMBL/GenBank/DDBJ databases">
        <authorList>
            <consortium name="NIH - Mammalian Gene Collection (MGC) project"/>
        </authorList>
    </citation>
    <scope>NUCLEOTIDE SEQUENCE [LARGE SCALE MRNA]</scope>
    <source>
        <strain>Crossbred X Angus</strain>
        <tissue>Liver</tissue>
    </source>
</reference>
<evidence type="ECO:0000250" key="1">
    <source>
        <dbReference type="UniProtKB" id="Q9H773"/>
    </source>
</evidence>
<evidence type="ECO:0000250" key="2">
    <source>
        <dbReference type="UniProtKB" id="Q9QY93"/>
    </source>
</evidence>
<evidence type="ECO:0000256" key="3">
    <source>
        <dbReference type="SAM" id="MobiDB-lite"/>
    </source>
</evidence>
<evidence type="ECO:0000305" key="4"/>
<feature type="chain" id="PRO_0000291768" description="dCTP pyrophosphatase 1">
    <location>
        <begin position="1"/>
        <end position="169"/>
    </location>
</feature>
<feature type="region of interest" description="Disordered" evidence="3">
    <location>
        <begin position="1"/>
        <end position="26"/>
    </location>
</feature>
<feature type="region of interest" description="Disordered" evidence="3">
    <location>
        <begin position="143"/>
        <end position="169"/>
    </location>
</feature>
<feature type="compositionally biased region" description="Polar residues" evidence="3">
    <location>
        <begin position="14"/>
        <end position="26"/>
    </location>
</feature>
<feature type="binding site" evidence="2">
    <location>
        <position position="37"/>
    </location>
    <ligand>
        <name>substrate</name>
    </ligand>
</feature>
<feature type="binding site" evidence="2">
    <location>
        <begin position="46"/>
        <end position="50"/>
    </location>
    <ligand>
        <name>substrate</name>
    </ligand>
</feature>
<feature type="binding site" evidence="2">
    <location>
        <position position="62"/>
    </location>
    <ligand>
        <name>Mg(2+)</name>
        <dbReference type="ChEBI" id="CHEBI:18420"/>
    </ligand>
</feature>
<feature type="binding site" evidence="2">
    <location>
        <position position="65"/>
    </location>
    <ligand>
        <name>Mg(2+)</name>
        <dbReference type="ChEBI" id="CHEBI:18420"/>
    </ligand>
</feature>
<feature type="binding site" evidence="2">
    <location>
        <position position="72"/>
    </location>
    <ligand>
        <name>substrate</name>
    </ligand>
</feature>
<feature type="binding site" evidence="2">
    <location>
        <position position="94"/>
    </location>
    <ligand>
        <name>Mg(2+)</name>
        <dbReference type="ChEBI" id="CHEBI:18420"/>
    </ligand>
</feature>
<feature type="binding site" evidence="2">
    <location>
        <position position="97"/>
    </location>
    <ligand>
        <name>Mg(2+)</name>
        <dbReference type="ChEBI" id="CHEBI:18420"/>
    </ligand>
</feature>
<feature type="binding site" evidence="2">
    <location>
        <position position="101"/>
    </location>
    <ligand>
        <name>substrate</name>
    </ligand>
</feature>
<feature type="modified residue" description="Phosphoserine" evidence="1">
    <location>
        <position position="84"/>
    </location>
</feature>
<gene>
    <name evidence="2" type="primary">DCTPP1</name>
</gene>
<protein>
    <recommendedName>
        <fullName evidence="4">dCTP pyrophosphatase 1</fullName>
        <ecNumber evidence="2">3.6.1.12</ecNumber>
    </recommendedName>
    <alternativeName>
        <fullName>Deoxycytidine-triphosphatase 1</fullName>
        <shortName>dCTPase 1</shortName>
    </alternativeName>
</protein>
<name>DCTP1_BOVIN</name>
<sequence length="169" mass="18626">MSASEEMLGGARGESTTATGPFSFSSEPTLEDIRRLHAEFAAERDWEQFHQPRNLLLALVGEVGELAELFQWKPDEEPGPQAWSPRERAALQEELSDILIYLVALAARCRVDLPQAVLCKMDTNRRRYPVHLSRGSACKYTDLPHGATSENQAMGPADPASESTGQVST</sequence>